<comment type="similarity">
    <text evidence="1">Belongs to the UPF0235 family.</text>
</comment>
<organism>
    <name type="scientific">Salmonella enteritidis PT4 (strain P125109)</name>
    <dbReference type="NCBI Taxonomy" id="550537"/>
    <lineage>
        <taxon>Bacteria</taxon>
        <taxon>Pseudomonadati</taxon>
        <taxon>Pseudomonadota</taxon>
        <taxon>Gammaproteobacteria</taxon>
        <taxon>Enterobacterales</taxon>
        <taxon>Enterobacteriaceae</taxon>
        <taxon>Salmonella</taxon>
    </lineage>
</organism>
<reference key="1">
    <citation type="journal article" date="2008" name="Genome Res.">
        <title>Comparative genome analysis of Salmonella enteritidis PT4 and Salmonella gallinarum 287/91 provides insights into evolutionary and host adaptation pathways.</title>
        <authorList>
            <person name="Thomson N.R."/>
            <person name="Clayton D.J."/>
            <person name="Windhorst D."/>
            <person name="Vernikos G."/>
            <person name="Davidson S."/>
            <person name="Churcher C."/>
            <person name="Quail M.A."/>
            <person name="Stevens M."/>
            <person name="Jones M.A."/>
            <person name="Watson M."/>
            <person name="Barron A."/>
            <person name="Layton A."/>
            <person name="Pickard D."/>
            <person name="Kingsley R.A."/>
            <person name="Bignell A."/>
            <person name="Clark L."/>
            <person name="Harris B."/>
            <person name="Ormond D."/>
            <person name="Abdellah Z."/>
            <person name="Brooks K."/>
            <person name="Cherevach I."/>
            <person name="Chillingworth T."/>
            <person name="Woodward J."/>
            <person name="Norberczak H."/>
            <person name="Lord A."/>
            <person name="Arrowsmith C."/>
            <person name="Jagels K."/>
            <person name="Moule S."/>
            <person name="Mungall K."/>
            <person name="Saunders M."/>
            <person name="Whitehead S."/>
            <person name="Chabalgoity J.A."/>
            <person name="Maskell D."/>
            <person name="Humphreys T."/>
            <person name="Roberts M."/>
            <person name="Barrow P.A."/>
            <person name="Dougan G."/>
            <person name="Parkhill J."/>
        </authorList>
    </citation>
    <scope>NUCLEOTIDE SEQUENCE [LARGE SCALE GENOMIC DNA]</scope>
    <source>
        <strain>P125109</strain>
    </source>
</reference>
<evidence type="ECO:0000255" key="1">
    <source>
        <dbReference type="HAMAP-Rule" id="MF_00634"/>
    </source>
</evidence>
<proteinExistence type="inferred from homology"/>
<sequence length="96" mass="10517">MSAVTRCEDGLVLRLYIQPKASRDSIVGLHGDEVKVAITAPPVDGQANSHLTKFLGKQFRVAKSQIVIEKGELGRHKQVKIIHPQQIPPEIAALTE</sequence>
<dbReference type="EMBL" id="AM933172">
    <property type="protein sequence ID" value="CAR34522.1"/>
    <property type="molecule type" value="Genomic_DNA"/>
</dbReference>
<dbReference type="RefSeq" id="WP_001277205.1">
    <property type="nucleotide sequence ID" value="NC_011294.1"/>
</dbReference>
<dbReference type="SMR" id="B5QY78"/>
<dbReference type="KEGG" id="set:SEN2945"/>
<dbReference type="HOGENOM" id="CLU_130694_5_0_6"/>
<dbReference type="Proteomes" id="UP000000613">
    <property type="component" value="Chromosome"/>
</dbReference>
<dbReference type="GO" id="GO:0005737">
    <property type="term" value="C:cytoplasm"/>
    <property type="evidence" value="ECO:0007669"/>
    <property type="project" value="TreeGrafter"/>
</dbReference>
<dbReference type="Gene3D" id="3.30.1200.10">
    <property type="entry name" value="YggU-like"/>
    <property type="match status" value="1"/>
</dbReference>
<dbReference type="HAMAP" id="MF_00634">
    <property type="entry name" value="UPF0235"/>
    <property type="match status" value="1"/>
</dbReference>
<dbReference type="InterPro" id="IPR003746">
    <property type="entry name" value="DUF167"/>
</dbReference>
<dbReference type="InterPro" id="IPR036591">
    <property type="entry name" value="YggU-like_sf"/>
</dbReference>
<dbReference type="NCBIfam" id="TIGR00251">
    <property type="entry name" value="DUF167 family protein"/>
    <property type="match status" value="1"/>
</dbReference>
<dbReference type="NCBIfam" id="NF003466">
    <property type="entry name" value="PRK05090.1"/>
    <property type="match status" value="1"/>
</dbReference>
<dbReference type="PANTHER" id="PTHR13420">
    <property type="entry name" value="UPF0235 PROTEIN C15ORF40"/>
    <property type="match status" value="1"/>
</dbReference>
<dbReference type="PANTHER" id="PTHR13420:SF7">
    <property type="entry name" value="UPF0235 PROTEIN C15ORF40"/>
    <property type="match status" value="1"/>
</dbReference>
<dbReference type="Pfam" id="PF02594">
    <property type="entry name" value="DUF167"/>
    <property type="match status" value="1"/>
</dbReference>
<dbReference type="SMART" id="SM01152">
    <property type="entry name" value="DUF167"/>
    <property type="match status" value="1"/>
</dbReference>
<dbReference type="SUPFAM" id="SSF69786">
    <property type="entry name" value="YggU-like"/>
    <property type="match status" value="1"/>
</dbReference>
<protein>
    <recommendedName>
        <fullName evidence="1">UPF0235 protein YggU</fullName>
    </recommendedName>
</protein>
<name>YGGU_SALEP</name>
<accession>B5QY78</accession>
<gene>
    <name evidence="1" type="primary">yggU</name>
    <name type="ordered locus">SEN2945</name>
</gene>
<feature type="chain" id="PRO_1000130708" description="UPF0235 protein YggU">
    <location>
        <begin position="1"/>
        <end position="96"/>
    </location>
</feature>